<protein>
    <recommendedName>
        <fullName evidence="1">Urease accessory protein UreF</fullName>
    </recommendedName>
</protein>
<feature type="chain" id="PRO_0000344180" description="Urease accessory protein UreF">
    <location>
        <begin position="1"/>
        <end position="229"/>
    </location>
</feature>
<evidence type="ECO:0000255" key="1">
    <source>
        <dbReference type="HAMAP-Rule" id="MF_01385"/>
    </source>
</evidence>
<keyword id="KW-0143">Chaperone</keyword>
<keyword id="KW-0963">Cytoplasm</keyword>
<keyword id="KW-0996">Nickel insertion</keyword>
<organism>
    <name type="scientific">Staphylococcus aureus (strain COL)</name>
    <dbReference type="NCBI Taxonomy" id="93062"/>
    <lineage>
        <taxon>Bacteria</taxon>
        <taxon>Bacillati</taxon>
        <taxon>Bacillota</taxon>
        <taxon>Bacilli</taxon>
        <taxon>Bacillales</taxon>
        <taxon>Staphylococcaceae</taxon>
        <taxon>Staphylococcus</taxon>
    </lineage>
</organism>
<accession>Q5HDR6</accession>
<proteinExistence type="inferred from homology"/>
<reference key="1">
    <citation type="journal article" date="2005" name="J. Bacteriol.">
        <title>Insights on evolution of virulence and resistance from the complete genome analysis of an early methicillin-resistant Staphylococcus aureus strain and a biofilm-producing methicillin-resistant Staphylococcus epidermidis strain.</title>
        <authorList>
            <person name="Gill S.R."/>
            <person name="Fouts D.E."/>
            <person name="Archer G.L."/>
            <person name="Mongodin E.F."/>
            <person name="DeBoy R.T."/>
            <person name="Ravel J."/>
            <person name="Paulsen I.T."/>
            <person name="Kolonay J.F."/>
            <person name="Brinkac L.M."/>
            <person name="Beanan M.J."/>
            <person name="Dodson R.J."/>
            <person name="Daugherty S.C."/>
            <person name="Madupu R."/>
            <person name="Angiuoli S.V."/>
            <person name="Durkin A.S."/>
            <person name="Haft D.H."/>
            <person name="Vamathevan J.J."/>
            <person name="Khouri H."/>
            <person name="Utterback T.R."/>
            <person name="Lee C."/>
            <person name="Dimitrov G."/>
            <person name="Jiang L."/>
            <person name="Qin H."/>
            <person name="Weidman J."/>
            <person name="Tran K."/>
            <person name="Kang K.H."/>
            <person name="Hance I.R."/>
            <person name="Nelson K.E."/>
            <person name="Fraser C.M."/>
        </authorList>
    </citation>
    <scope>NUCLEOTIDE SEQUENCE [LARGE SCALE GENOMIC DNA]</scope>
    <source>
        <strain>COL</strain>
    </source>
</reference>
<dbReference type="EMBL" id="CP000046">
    <property type="protein sequence ID" value="AAW38504.1"/>
    <property type="molecule type" value="Genomic_DNA"/>
</dbReference>
<dbReference type="RefSeq" id="WP_000565255.1">
    <property type="nucleotide sequence ID" value="NZ_JBGOFO010000004.1"/>
</dbReference>
<dbReference type="SMR" id="Q5HDR6"/>
<dbReference type="KEGG" id="sac:SACOL2284"/>
<dbReference type="HOGENOM" id="CLU_049215_4_2_9"/>
<dbReference type="Proteomes" id="UP000000530">
    <property type="component" value="Chromosome"/>
</dbReference>
<dbReference type="GO" id="GO:0005737">
    <property type="term" value="C:cytoplasm"/>
    <property type="evidence" value="ECO:0007669"/>
    <property type="project" value="UniProtKB-SubCell"/>
</dbReference>
<dbReference type="GO" id="GO:0016151">
    <property type="term" value="F:nickel cation binding"/>
    <property type="evidence" value="ECO:0007669"/>
    <property type="project" value="UniProtKB-UniRule"/>
</dbReference>
<dbReference type="Gene3D" id="1.10.4190.10">
    <property type="entry name" value="Urease accessory protein UreF"/>
    <property type="match status" value="1"/>
</dbReference>
<dbReference type="HAMAP" id="MF_01385">
    <property type="entry name" value="UreF"/>
    <property type="match status" value="1"/>
</dbReference>
<dbReference type="InterPro" id="IPR002639">
    <property type="entry name" value="UreF"/>
</dbReference>
<dbReference type="InterPro" id="IPR038277">
    <property type="entry name" value="UreF_sf"/>
</dbReference>
<dbReference type="PANTHER" id="PTHR33620">
    <property type="entry name" value="UREASE ACCESSORY PROTEIN F"/>
    <property type="match status" value="1"/>
</dbReference>
<dbReference type="PANTHER" id="PTHR33620:SF1">
    <property type="entry name" value="UREASE ACCESSORY PROTEIN F"/>
    <property type="match status" value="1"/>
</dbReference>
<dbReference type="Pfam" id="PF01730">
    <property type="entry name" value="UreF"/>
    <property type="match status" value="1"/>
</dbReference>
<dbReference type="PIRSF" id="PIRSF009467">
    <property type="entry name" value="Ureas_acces_UreF"/>
    <property type="match status" value="1"/>
</dbReference>
<gene>
    <name evidence="1" type="primary">ureF</name>
    <name type="ordered locus">SACOL2284</name>
</gene>
<name>UREF_STAAC</name>
<sequence>MIDHTHLRLFQFCDSQFPTGAFSHSFGLETYIQRNIIHDDHTFIAWLKMFLQEQLTYSDGLAMRLVYDALENDDTQKVLHIDKLMFVQNLPKETRVGAKQMGTRMVKLALELYNSPWIAWYHQQMQDKKAKLNPAICFTMLGHHLGVDIETIIDYYLYQNVSSLTQNAVRAIPLGQTAGQKIVTHMIPYIEGTRKQIFELKEADFGMTAPGLELNQMAHENVNVRIFIS</sequence>
<comment type="function">
    <text evidence="1">Required for maturation of urease via the functional incorporation of the urease nickel metallocenter.</text>
</comment>
<comment type="subunit">
    <text evidence="1">UreD, UreF and UreG form a complex that acts as a GTP-hydrolysis-dependent molecular chaperone, activating the urease apoprotein by helping to assemble the nickel containing metallocenter of UreC. The UreE protein probably delivers the nickel.</text>
</comment>
<comment type="subcellular location">
    <subcellularLocation>
        <location evidence="1">Cytoplasm</location>
    </subcellularLocation>
</comment>
<comment type="similarity">
    <text evidence="1">Belongs to the UreF family.</text>
</comment>